<keyword id="KW-1185">Reference proteome</keyword>
<feature type="chain" id="PRO_0000317183" description="Protein CFAP20DC">
    <location>
        <begin position="1"/>
        <end position="658"/>
    </location>
</feature>
<feature type="region of interest" description="Disordered" evidence="1">
    <location>
        <begin position="312"/>
        <end position="522"/>
    </location>
</feature>
<feature type="region of interest" description="Disordered" evidence="1">
    <location>
        <begin position="589"/>
        <end position="634"/>
    </location>
</feature>
<feature type="compositionally biased region" description="Polar residues" evidence="1">
    <location>
        <begin position="319"/>
        <end position="328"/>
    </location>
</feature>
<feature type="compositionally biased region" description="Basic and acidic residues" evidence="1">
    <location>
        <begin position="339"/>
        <end position="349"/>
    </location>
</feature>
<feature type="compositionally biased region" description="Low complexity" evidence="1">
    <location>
        <begin position="351"/>
        <end position="363"/>
    </location>
</feature>
<feature type="compositionally biased region" description="Low complexity" evidence="1">
    <location>
        <begin position="417"/>
        <end position="434"/>
    </location>
</feature>
<feature type="compositionally biased region" description="Basic and acidic residues" evidence="1">
    <location>
        <begin position="494"/>
        <end position="506"/>
    </location>
</feature>
<feature type="compositionally biased region" description="Acidic residues" evidence="1">
    <location>
        <begin position="507"/>
        <end position="521"/>
    </location>
</feature>
<feature type="compositionally biased region" description="Polar residues" evidence="1">
    <location>
        <begin position="625"/>
        <end position="634"/>
    </location>
</feature>
<evidence type="ECO:0000256" key="1">
    <source>
        <dbReference type="SAM" id="MobiDB-lite"/>
    </source>
</evidence>
<evidence type="ECO:0000305" key="2"/>
<evidence type="ECO:0000312" key="3">
    <source>
        <dbReference type="RGD" id="1359720"/>
    </source>
</evidence>
<reference key="1">
    <citation type="journal article" date="2004" name="Genome Res.">
        <title>The status, quality, and expansion of the NIH full-length cDNA project: the Mammalian Gene Collection (MGC).</title>
        <authorList>
            <consortium name="The MGC Project Team"/>
        </authorList>
    </citation>
    <scope>NUCLEOTIDE SEQUENCE [LARGE SCALE MRNA]</scope>
    <source>
        <tissue>Testis</tissue>
    </source>
</reference>
<accession>Q4V7B1</accession>
<dbReference type="EMBL" id="BC098040">
    <property type="protein sequence ID" value="AAH98040.1"/>
    <property type="molecule type" value="mRNA"/>
</dbReference>
<dbReference type="RefSeq" id="NP_001014159.2">
    <property type="nucleotide sequence ID" value="NM_001014137.2"/>
</dbReference>
<dbReference type="SMR" id="Q4V7B1"/>
<dbReference type="FunCoup" id="Q4V7B1">
    <property type="interactions" value="240"/>
</dbReference>
<dbReference type="STRING" id="10116.ENSRNOP00000057881"/>
<dbReference type="iPTMnet" id="Q4V7B1"/>
<dbReference type="PhosphoSitePlus" id="Q4V7B1"/>
<dbReference type="PaxDb" id="10116-ENSRNOP00000057881"/>
<dbReference type="Ensembl" id="ENSRNOT00000061169.5">
    <property type="protein sequence ID" value="ENSRNOP00000057881.5"/>
    <property type="gene ID" value="ENSRNOG00000007206.7"/>
</dbReference>
<dbReference type="GeneID" id="361016"/>
<dbReference type="KEGG" id="rno:361016"/>
<dbReference type="AGR" id="RGD:1359720"/>
<dbReference type="CTD" id="200844"/>
<dbReference type="RGD" id="1359720">
    <property type="gene designation" value="Cfap20dc"/>
</dbReference>
<dbReference type="eggNOG" id="KOG3213">
    <property type="taxonomic scope" value="Eukaryota"/>
</dbReference>
<dbReference type="GeneTree" id="ENSGT00390000005497"/>
<dbReference type="InParanoid" id="Q4V7B1"/>
<dbReference type="PhylomeDB" id="Q4V7B1"/>
<dbReference type="PRO" id="PR:Q4V7B1"/>
<dbReference type="Proteomes" id="UP000002494">
    <property type="component" value="Chromosome 15"/>
</dbReference>
<dbReference type="InterPro" id="IPR040441">
    <property type="entry name" value="CFA20/CFAP20DC"/>
</dbReference>
<dbReference type="InterPro" id="IPR007714">
    <property type="entry name" value="CFA20_dom"/>
</dbReference>
<dbReference type="PANTHER" id="PTHR12458">
    <property type="entry name" value="ORF PROTEIN"/>
    <property type="match status" value="1"/>
</dbReference>
<dbReference type="Pfam" id="PF05018">
    <property type="entry name" value="CFA20_dom"/>
    <property type="match status" value="1"/>
</dbReference>
<gene>
    <name evidence="3" type="primary">Cfap20dc</name>
</gene>
<organism>
    <name type="scientific">Rattus norvegicus</name>
    <name type="common">Rat</name>
    <dbReference type="NCBI Taxonomy" id="10116"/>
    <lineage>
        <taxon>Eukaryota</taxon>
        <taxon>Metazoa</taxon>
        <taxon>Chordata</taxon>
        <taxon>Craniata</taxon>
        <taxon>Vertebrata</taxon>
        <taxon>Euteleostomi</taxon>
        <taxon>Mammalia</taxon>
        <taxon>Eutheria</taxon>
        <taxon>Euarchontoglires</taxon>
        <taxon>Glires</taxon>
        <taxon>Rodentia</taxon>
        <taxon>Myomorpha</taxon>
        <taxon>Muroidea</taxon>
        <taxon>Muridae</taxon>
        <taxon>Murinae</taxon>
        <taxon>Rattus</taxon>
    </lineage>
</organism>
<proteinExistence type="evidence at transcript level"/>
<protein>
    <recommendedName>
        <fullName evidence="2">Protein CFAP20DC</fullName>
    </recommendedName>
</protein>
<name>CF20D_RAT</name>
<sequence>MFKNEYQGGAFVEIFSAQGKNPGAKWKILGSPSVIWKEFDKEVKSFVFVLEGSSQTNRIQLPKENKQILGLIQRFLVLQIYVPLGQDFSTELLITDLGNIKRRLYLSTVHKEVSSTPLHAKIPLFMIKRKIWCNLCIDLVAFTSEIFKGAVFQSLDGIIVSANCKLRKIFTLKFKPRETADRDDEPADIIPRSCQLATDVPHVTQLLNMTKLRQTEIKFGGHPLRSAESDQFISSRAGSVRSSKSQDVCHIAFGSRVLGPPPPSGRRNNLRLSAETVRSIGYKNNQSCQQPAEEKHVNSADTSALLIPLSEQQGEKGSSHPVKQTTPLPASLPTPYPHPPRDPSADKGSSRRGLGLRSSSGSRTEARCGSSSGNSRSEEDVAMAANNLTQLTTEPVRASTPEPPAAEPPDEWIFPESSGPPSGAAGSSSSLLLDGDSRTASHLWLETSKDSDPDQAEGTQMAPKDIFTFSSRPRSAPHGKSHDLSPTGCPCILDPKEDSRVTKGDTELEDDFYGSDSSEEEYNWRNYQPSQMSESELQMLASLRRQQNEDLEDTGAPHGLSASQVDNCNVSISTSSDDTTTWNSCLPPPVNQGRHYQKEMNPPSPSNPRDWLNMLSPPIVPPSQQPLEQSLDSSASLSVQGGALLLTQPHLASCAVGC</sequence>